<comment type="similarity">
    <text evidence="3">Belongs to the bacterial ribosomal protein bS21 family.</text>
</comment>
<accession>P68685</accession>
<accession>P02379</accession>
<accession>Q8ZI69</accession>
<sequence>MPVIKVRENEPFDVALRRFKRSCEKAGVLAEVRRREFYEKPTTERKRAKASAVKRHAKKLARENARRTRLY</sequence>
<gene>
    <name type="primary">rpsU</name>
    <name type="ordered locus">SF3106</name>
    <name type="ordered locus">S3311</name>
</gene>
<feature type="initiator methionine" description="Removed" evidence="1">
    <location>
        <position position="1"/>
    </location>
</feature>
<feature type="chain" id="PRO_0000178372" description="Small ribosomal subunit protein bS21">
    <location>
        <begin position="2"/>
        <end position="71"/>
    </location>
</feature>
<feature type="region of interest" description="Disordered" evidence="2">
    <location>
        <begin position="43"/>
        <end position="71"/>
    </location>
</feature>
<feature type="compositionally biased region" description="Basic residues" evidence="2">
    <location>
        <begin position="46"/>
        <end position="59"/>
    </location>
</feature>
<feature type="compositionally biased region" description="Basic and acidic residues" evidence="2">
    <location>
        <begin position="60"/>
        <end position="71"/>
    </location>
</feature>
<dbReference type="EMBL" id="AE005674">
    <property type="protein sequence ID" value="AAN44582.1"/>
    <property type="molecule type" value="Genomic_DNA"/>
</dbReference>
<dbReference type="EMBL" id="AE014073">
    <property type="protein sequence ID" value="AAP18394.1"/>
    <property type="molecule type" value="Genomic_DNA"/>
</dbReference>
<dbReference type="RefSeq" id="NP_708875.1">
    <property type="nucleotide sequence ID" value="NC_004337.2"/>
</dbReference>
<dbReference type="RefSeq" id="WP_001144069.1">
    <property type="nucleotide sequence ID" value="NZ_WPGW01000061.1"/>
</dbReference>
<dbReference type="SMR" id="P68685"/>
<dbReference type="STRING" id="198214.SF3106"/>
<dbReference type="PaxDb" id="198214-SF3106"/>
<dbReference type="GeneID" id="1027192"/>
<dbReference type="GeneID" id="98390195"/>
<dbReference type="KEGG" id="sfl:SF3106"/>
<dbReference type="KEGG" id="sfx:S3311"/>
<dbReference type="PATRIC" id="fig|198214.7.peg.3685"/>
<dbReference type="HOGENOM" id="CLU_159258_1_0_6"/>
<dbReference type="Proteomes" id="UP000001006">
    <property type="component" value="Chromosome"/>
</dbReference>
<dbReference type="Proteomes" id="UP000002673">
    <property type="component" value="Chromosome"/>
</dbReference>
<dbReference type="GO" id="GO:1990904">
    <property type="term" value="C:ribonucleoprotein complex"/>
    <property type="evidence" value="ECO:0007669"/>
    <property type="project" value="UniProtKB-KW"/>
</dbReference>
<dbReference type="GO" id="GO:0005840">
    <property type="term" value="C:ribosome"/>
    <property type="evidence" value="ECO:0007669"/>
    <property type="project" value="UniProtKB-KW"/>
</dbReference>
<dbReference type="GO" id="GO:0003735">
    <property type="term" value="F:structural constituent of ribosome"/>
    <property type="evidence" value="ECO:0007669"/>
    <property type="project" value="InterPro"/>
</dbReference>
<dbReference type="GO" id="GO:0006412">
    <property type="term" value="P:translation"/>
    <property type="evidence" value="ECO:0007669"/>
    <property type="project" value="UniProtKB-UniRule"/>
</dbReference>
<dbReference type="FunFam" id="1.20.5.1150:FF:000001">
    <property type="entry name" value="30S ribosomal protein S21"/>
    <property type="match status" value="1"/>
</dbReference>
<dbReference type="Gene3D" id="1.20.5.1150">
    <property type="entry name" value="Ribosomal protein S8"/>
    <property type="match status" value="1"/>
</dbReference>
<dbReference type="HAMAP" id="MF_00358">
    <property type="entry name" value="Ribosomal_bS21"/>
    <property type="match status" value="1"/>
</dbReference>
<dbReference type="InterPro" id="IPR001911">
    <property type="entry name" value="Ribosomal_bS21"/>
</dbReference>
<dbReference type="InterPro" id="IPR018278">
    <property type="entry name" value="Ribosomal_bS21_CS"/>
</dbReference>
<dbReference type="InterPro" id="IPR038380">
    <property type="entry name" value="Ribosomal_bS21_sf"/>
</dbReference>
<dbReference type="NCBIfam" id="TIGR00030">
    <property type="entry name" value="S21p"/>
    <property type="match status" value="1"/>
</dbReference>
<dbReference type="PANTHER" id="PTHR21109">
    <property type="entry name" value="MITOCHONDRIAL 28S RIBOSOMAL PROTEIN S21"/>
    <property type="match status" value="1"/>
</dbReference>
<dbReference type="PANTHER" id="PTHR21109:SF22">
    <property type="entry name" value="SMALL RIBOSOMAL SUBUNIT PROTEIN BS21"/>
    <property type="match status" value="1"/>
</dbReference>
<dbReference type="Pfam" id="PF01165">
    <property type="entry name" value="Ribosomal_S21"/>
    <property type="match status" value="1"/>
</dbReference>
<dbReference type="PRINTS" id="PR00976">
    <property type="entry name" value="RIBOSOMALS21"/>
</dbReference>
<dbReference type="PROSITE" id="PS01181">
    <property type="entry name" value="RIBOSOMAL_S21"/>
    <property type="match status" value="1"/>
</dbReference>
<keyword id="KW-1185">Reference proteome</keyword>
<keyword id="KW-0687">Ribonucleoprotein</keyword>
<keyword id="KW-0689">Ribosomal protein</keyword>
<organism>
    <name type="scientific">Shigella flexneri</name>
    <dbReference type="NCBI Taxonomy" id="623"/>
    <lineage>
        <taxon>Bacteria</taxon>
        <taxon>Pseudomonadati</taxon>
        <taxon>Pseudomonadota</taxon>
        <taxon>Gammaproteobacteria</taxon>
        <taxon>Enterobacterales</taxon>
        <taxon>Enterobacteriaceae</taxon>
        <taxon>Shigella</taxon>
    </lineage>
</organism>
<proteinExistence type="inferred from homology"/>
<name>RS21_SHIFL</name>
<protein>
    <recommendedName>
        <fullName evidence="3">Small ribosomal subunit protein bS21</fullName>
    </recommendedName>
    <alternativeName>
        <fullName>30S ribosomal protein S21</fullName>
    </alternativeName>
</protein>
<reference key="1">
    <citation type="journal article" date="2002" name="Nucleic Acids Res.">
        <title>Genome sequence of Shigella flexneri 2a: insights into pathogenicity through comparison with genomes of Escherichia coli K12 and O157.</title>
        <authorList>
            <person name="Jin Q."/>
            <person name="Yuan Z."/>
            <person name="Xu J."/>
            <person name="Wang Y."/>
            <person name="Shen Y."/>
            <person name="Lu W."/>
            <person name="Wang J."/>
            <person name="Liu H."/>
            <person name="Yang J."/>
            <person name="Yang F."/>
            <person name="Zhang X."/>
            <person name="Zhang J."/>
            <person name="Yang G."/>
            <person name="Wu H."/>
            <person name="Qu D."/>
            <person name="Dong J."/>
            <person name="Sun L."/>
            <person name="Xue Y."/>
            <person name="Zhao A."/>
            <person name="Gao Y."/>
            <person name="Zhu J."/>
            <person name="Kan B."/>
            <person name="Ding K."/>
            <person name="Chen S."/>
            <person name="Cheng H."/>
            <person name="Yao Z."/>
            <person name="He B."/>
            <person name="Chen R."/>
            <person name="Ma D."/>
            <person name="Qiang B."/>
            <person name="Wen Y."/>
            <person name="Hou Y."/>
            <person name="Yu J."/>
        </authorList>
    </citation>
    <scope>NUCLEOTIDE SEQUENCE [LARGE SCALE GENOMIC DNA]</scope>
    <source>
        <strain>301 / Serotype 2a</strain>
    </source>
</reference>
<reference key="2">
    <citation type="journal article" date="2003" name="Infect. Immun.">
        <title>Complete genome sequence and comparative genomics of Shigella flexneri serotype 2a strain 2457T.</title>
        <authorList>
            <person name="Wei J."/>
            <person name="Goldberg M.B."/>
            <person name="Burland V."/>
            <person name="Venkatesan M.M."/>
            <person name="Deng W."/>
            <person name="Fournier G."/>
            <person name="Mayhew G.F."/>
            <person name="Plunkett G. III"/>
            <person name="Rose D.J."/>
            <person name="Darling A."/>
            <person name="Mau B."/>
            <person name="Perna N.T."/>
            <person name="Payne S.M."/>
            <person name="Runyen-Janecky L.J."/>
            <person name="Zhou S."/>
            <person name="Schwartz D.C."/>
            <person name="Blattner F.R."/>
        </authorList>
    </citation>
    <scope>NUCLEOTIDE SEQUENCE [LARGE SCALE GENOMIC DNA]</scope>
    <source>
        <strain>ATCC 700930 / 2457T / Serotype 2a</strain>
    </source>
</reference>
<evidence type="ECO:0000250" key="1"/>
<evidence type="ECO:0000256" key="2">
    <source>
        <dbReference type="SAM" id="MobiDB-lite"/>
    </source>
</evidence>
<evidence type="ECO:0000305" key="3"/>